<dbReference type="EMBL" id="AE000516">
    <property type="protein sequence ID" value="AAK45719.1"/>
    <property type="molecule type" value="Genomic_DNA"/>
</dbReference>
<dbReference type="PIR" id="G70901">
    <property type="entry name" value="G70901"/>
</dbReference>
<dbReference type="RefSeq" id="WP_003407310.1">
    <property type="nucleotide sequence ID" value="NZ_KK341227.1"/>
</dbReference>
<dbReference type="SMR" id="P9WJY2"/>
<dbReference type="KEGG" id="mtc:MT1454"/>
<dbReference type="PATRIC" id="fig|83331.31.peg.1562"/>
<dbReference type="HOGENOM" id="CLU_000960_2_5_11"/>
<dbReference type="Proteomes" id="UP000001020">
    <property type="component" value="Chromosome"/>
</dbReference>
<dbReference type="GO" id="GO:0005886">
    <property type="term" value="C:plasma membrane"/>
    <property type="evidence" value="ECO:0007669"/>
    <property type="project" value="UniProtKB-SubCell"/>
</dbReference>
<dbReference type="GO" id="GO:0008289">
    <property type="term" value="F:lipid binding"/>
    <property type="evidence" value="ECO:0007669"/>
    <property type="project" value="UniProtKB-KW"/>
</dbReference>
<dbReference type="GO" id="GO:0022857">
    <property type="term" value="F:transmembrane transporter activity"/>
    <property type="evidence" value="ECO:0007669"/>
    <property type="project" value="InterPro"/>
</dbReference>
<dbReference type="GO" id="GO:0006869">
    <property type="term" value="P:lipid transport"/>
    <property type="evidence" value="ECO:0007669"/>
    <property type="project" value="UniProtKB-KW"/>
</dbReference>
<dbReference type="CDD" id="cd17321">
    <property type="entry name" value="MFS_MMR_MDR_like"/>
    <property type="match status" value="1"/>
</dbReference>
<dbReference type="FunFam" id="1.20.1720.10:FF:000020">
    <property type="entry name" value="Probable triacylglyceride transporter BCG_1471c"/>
    <property type="match status" value="1"/>
</dbReference>
<dbReference type="Gene3D" id="1.20.1250.20">
    <property type="entry name" value="MFS general substrate transporter like domains"/>
    <property type="match status" value="1"/>
</dbReference>
<dbReference type="Gene3D" id="1.20.1720.10">
    <property type="entry name" value="Multidrug resistance protein D"/>
    <property type="match status" value="1"/>
</dbReference>
<dbReference type="InterPro" id="IPR011701">
    <property type="entry name" value="MFS"/>
</dbReference>
<dbReference type="InterPro" id="IPR020846">
    <property type="entry name" value="MFS_dom"/>
</dbReference>
<dbReference type="InterPro" id="IPR036259">
    <property type="entry name" value="MFS_trans_sf"/>
</dbReference>
<dbReference type="InterPro" id="IPR005829">
    <property type="entry name" value="Sugar_transporter_CS"/>
</dbReference>
<dbReference type="PANTHER" id="PTHR23501">
    <property type="entry name" value="MAJOR FACILITATOR SUPERFAMILY"/>
    <property type="match status" value="1"/>
</dbReference>
<dbReference type="PANTHER" id="PTHR23501:SF191">
    <property type="entry name" value="VACUOLAR BASIC AMINO ACID TRANSPORTER 4"/>
    <property type="match status" value="1"/>
</dbReference>
<dbReference type="Pfam" id="PF07690">
    <property type="entry name" value="MFS_1"/>
    <property type="match status" value="1"/>
</dbReference>
<dbReference type="SUPFAM" id="SSF103473">
    <property type="entry name" value="MFS general substrate transporter"/>
    <property type="match status" value="1"/>
</dbReference>
<dbReference type="PROSITE" id="PS50850">
    <property type="entry name" value="MFS"/>
    <property type="match status" value="1"/>
</dbReference>
<protein>
    <recommendedName>
        <fullName evidence="3">Triacylglyceride transporter MT1454</fullName>
    </recommendedName>
    <alternativeName>
        <fullName>MFS-type drug efflux transporter P55</fullName>
    </alternativeName>
</protein>
<name>MFS55_MYCTO</name>
<organism>
    <name type="scientific">Mycobacterium tuberculosis (strain CDC 1551 / Oshkosh)</name>
    <dbReference type="NCBI Taxonomy" id="83331"/>
    <lineage>
        <taxon>Bacteria</taxon>
        <taxon>Bacillati</taxon>
        <taxon>Actinomycetota</taxon>
        <taxon>Actinomycetes</taxon>
        <taxon>Mycobacteriales</taxon>
        <taxon>Mycobacteriaceae</taxon>
        <taxon>Mycobacterium</taxon>
        <taxon>Mycobacterium tuberculosis complex</taxon>
    </lineage>
</organism>
<feature type="chain" id="PRO_0000427750" description="Triacylglyceride transporter MT1454">
    <location>
        <begin position="1"/>
        <end position="518"/>
    </location>
</feature>
<feature type="transmembrane region" description="Helical; Name=TM1" evidence="4">
    <location>
        <begin position="7"/>
        <end position="27"/>
    </location>
</feature>
<feature type="transmembrane region" description="Helical; Name=TM2" evidence="4">
    <location>
        <begin position="46"/>
        <end position="66"/>
    </location>
</feature>
<feature type="transmembrane region" description="Helical; Name=TM3" evidence="4">
    <location>
        <begin position="76"/>
        <end position="96"/>
    </location>
</feature>
<feature type="transmembrane region" description="Helical; Name=TM4" evidence="4">
    <location>
        <begin position="110"/>
        <end position="130"/>
    </location>
</feature>
<feature type="transmembrane region" description="Helical; Name=TM5" evidence="4">
    <location>
        <begin position="144"/>
        <end position="164"/>
    </location>
</feature>
<feature type="transmembrane region" description="Helical; Name=TM6" evidence="4">
    <location>
        <begin position="170"/>
        <end position="190"/>
    </location>
</feature>
<feature type="transmembrane region" description="Helical; Name=TMA" evidence="4">
    <location>
        <begin position="201"/>
        <end position="221"/>
    </location>
</feature>
<feature type="transmembrane region" description="Helical; Name=TMB" evidence="4">
    <location>
        <begin position="230"/>
        <end position="250"/>
    </location>
</feature>
<feature type="transmembrane region" description="Helical; Name=TM7" evidence="4">
    <location>
        <begin position="270"/>
        <end position="290"/>
    </location>
</feature>
<feature type="transmembrane region" description="Helical; Name=TM8" evidence="4">
    <location>
        <begin position="308"/>
        <end position="328"/>
    </location>
</feature>
<feature type="transmembrane region" description="Helical; Name=TM9" evidence="4">
    <location>
        <begin position="337"/>
        <end position="357"/>
    </location>
</feature>
<feature type="transmembrane region" description="Helical; Name=TM10" evidence="4">
    <location>
        <begin position="379"/>
        <end position="401"/>
    </location>
</feature>
<feature type="transmembrane region" description="Helical; Name=TM11" evidence="4">
    <location>
        <begin position="408"/>
        <end position="428"/>
    </location>
</feature>
<feature type="transmembrane region" description="Helical; Name=TM12" evidence="4">
    <location>
        <begin position="475"/>
        <end position="495"/>
    </location>
</feature>
<feature type="region of interest" description="Beta-hairpin" evidence="2">
    <location>
        <begin position="363"/>
        <end position="373"/>
    </location>
</feature>
<feature type="site" description="Protonation/deprotonation site" evidence="2">
    <location>
        <position position="22"/>
    </location>
</feature>
<feature type="site" description="Forms salt bridge with Arg-426, probably closes bottom of cavity" evidence="2">
    <location>
        <position position="147"/>
    </location>
</feature>
<feature type="site" description="Forms salt bridge with Gln-157, probably closes bottom of cavity" evidence="2">
    <location>
        <position position="417"/>
    </location>
</feature>
<comment type="function">
    <text evidence="2 3">In association with lipoprotein LprG probably transports triacylglycerides (TAG) across the inner cell membrane into the periplasm; TAG probably regulates lipid metabolism and growth regulation and plays a structural role in the outer membrane (By similarity). TAG (and maybe other lipids) enters the central cavity of the P55 transporter from within the cell inner membrane via clefts on the cytoplasmic face of P55 between TM5-TM8 and TM2-TM11 (By similarity). From there the lipid is probably transferred to the hydrophobic cavity of LprG (By similarity). Probably does not function as a bona fide drug efflux pump, but instead plays a role in outer membrane biogenesis. Probably required with LprG for normal surface localization of lipoarabinomannan (LAM).</text>
</comment>
<comment type="subcellular location">
    <subcellularLocation>
        <location evidence="5">Cell inner membrane</location>
        <topology evidence="1">Multi-pass membrane protein</topology>
    </subcellularLocation>
</comment>
<comment type="domain">
    <text evidence="2">Has a canonical major facilitator superfamily fold with two N- and C-terminal domains of 6 transmembrane helices (TM 1-6 and 7-12) and two other transmembrane helices between the domains (TMA and TMB) that form a hairpin. Between TM9-TM10 is a periplasmic beta-hairpin that extends along the membrane plane, TM11 and TM12 helices extend into the periplasm. Asp-22 is a possible protonation/deprotonation site.</text>
</comment>
<comment type="miscellaneous">
    <text evidence="5">Bacterial LAM blocks host cell phagosome-lysosome fusion and is one way in which M.tuberculosis evades the host immune system.</text>
</comment>
<comment type="miscellaneous">
    <text evidence="5">Triacylglycerides accumulate in lipid droplets in the cytoplasm of M.tuberculosis stationary phase and dormant bacteria, and are used as an energy source during starvation.</text>
</comment>
<comment type="similarity">
    <text evidence="5">Belongs to the major facilitator superfamily. P55 (TC 2.A.1.3.34) family.</text>
</comment>
<keyword id="KW-0997">Cell inner membrane</keyword>
<keyword id="KW-1003">Cell membrane</keyword>
<keyword id="KW-0445">Lipid transport</keyword>
<keyword id="KW-0446">Lipid-binding</keyword>
<keyword id="KW-0472">Membrane</keyword>
<keyword id="KW-1185">Reference proteome</keyword>
<keyword id="KW-0812">Transmembrane</keyword>
<keyword id="KW-1133">Transmembrane helix</keyword>
<keyword id="KW-0813">Transport</keyword>
<sequence length="518" mass="54689">MRAGRRVAISAGSLAVLLGALDTYVVVTIMRDIMNSVGIPINQLHRITWIVTMYLLGYIAAMPLLGRASDRFGRKLMLQVSLAGFIIGSVVTALAGHFGDFHMLIAGRTIQGVASGALLPITLALGADLWSQRNRAGVLGGIGAAQELGSVLGPLYGIFIVWLLHDWRDVFWINVPLTAIAMVMIHFSLPSHDRSTEPERVDLVGGLLLALALGLAVIGLYNPNPDGKHVLPDYGAPLLVGALVAAVAFFGWERFARTRLIDPAGVHFRPFLSALGASVAAGAALMVTLVDVELFGQGVLQMDQAQAAGMLLWFLIALPIGAVTGGWIATRAGDRAVAFAGLLIAAYGYWLISHWPVDLLADRHNILGLFTVPAMHTDLVVAGLGLGLVIGPLSSATLRVVPSAQHGIASAAVVVARMTGMLIGVAALSAWGLYRFNQILAGLSAAIPPNASLLERAAAIGARYQQAFALMYGEIFTITAIVCVFGAVLGLLISGRKEHADEPEVQEQPTLAPQVEPL</sequence>
<gene>
    <name type="ordered locus">MT1454</name>
</gene>
<evidence type="ECO:0000250" key="1"/>
<evidence type="ECO:0000250" key="2">
    <source>
        <dbReference type="UniProtKB" id="K5B8L6"/>
    </source>
</evidence>
<evidence type="ECO:0000250" key="3">
    <source>
        <dbReference type="UniProtKB" id="P9WJY3"/>
    </source>
</evidence>
<evidence type="ECO:0000255" key="4"/>
<evidence type="ECO:0000305" key="5"/>
<reference key="1">
    <citation type="journal article" date="2002" name="J. Bacteriol.">
        <title>Whole-genome comparison of Mycobacterium tuberculosis clinical and laboratory strains.</title>
        <authorList>
            <person name="Fleischmann R.D."/>
            <person name="Alland D."/>
            <person name="Eisen J.A."/>
            <person name="Carpenter L."/>
            <person name="White O."/>
            <person name="Peterson J.D."/>
            <person name="DeBoy R.T."/>
            <person name="Dodson R.J."/>
            <person name="Gwinn M.L."/>
            <person name="Haft D.H."/>
            <person name="Hickey E.K."/>
            <person name="Kolonay J.F."/>
            <person name="Nelson W.C."/>
            <person name="Umayam L.A."/>
            <person name="Ermolaeva M.D."/>
            <person name="Salzberg S.L."/>
            <person name="Delcher A."/>
            <person name="Utterback T.R."/>
            <person name="Weidman J.F."/>
            <person name="Khouri H.M."/>
            <person name="Gill J."/>
            <person name="Mikula A."/>
            <person name="Bishai W."/>
            <person name="Jacobs W.R. Jr."/>
            <person name="Venter J.C."/>
            <person name="Fraser C.M."/>
        </authorList>
    </citation>
    <scope>NUCLEOTIDE SEQUENCE [LARGE SCALE GENOMIC DNA]</scope>
    <source>
        <strain>CDC 1551 / Oshkosh</strain>
    </source>
</reference>
<accession>P9WJY2</accession>
<accession>L0T9B4</accession>
<accession>P71678</accession>
<accession>Q7D8H0</accession>
<proteinExistence type="inferred from homology"/>